<name>MBPHL_HUMAN</name>
<sequence length="354" mass="38733">MEAATAPEVAAGSKLKVKEASPADAEPPQASPGQGAGSPTPQLLPPIEEHPKIWLPRALRQTYIRKVGDTVNLLIPFQGKPKPQAIWTHDGCALDTRRVSVRNGEQDSILFIREAQRADSGRYQLRVQLGGLEATATIDILVIERPGPPQSIKLVDVWGFSATLEWTPPQDTGNTALLGYTVQKADTKSGLWFTVLEHYHRTSCIVSDLIIGNSYAFRVFAENQCGLSETAPITTDLAHIQKAATVYKTKGFAQRDFSEAPKFTQPLADCTTVTGYNTQLFCCVRASPRPKIIWLKNKMDIQGNPKYRALTHLGICSLEIRKPGPFDGGIYTCKAVNPLGEASVDCRVDVKVPN</sequence>
<feature type="chain" id="PRO_0000330019" description="Myosin-binding protein H-like">
    <location>
        <begin position="1"/>
        <end position="354"/>
    </location>
</feature>
<feature type="domain" description="Ig-like C2-type 1">
    <location>
        <begin position="45"/>
        <end position="139"/>
    </location>
</feature>
<feature type="domain" description="Fibronectin type-III" evidence="4">
    <location>
        <begin position="148"/>
        <end position="238"/>
    </location>
</feature>
<feature type="domain" description="Ig-like C2-type 2">
    <location>
        <begin position="261"/>
        <end position="345"/>
    </location>
</feature>
<feature type="region of interest" description="Disordered" evidence="5">
    <location>
        <begin position="1"/>
        <end position="47"/>
    </location>
</feature>
<feature type="modified residue" description="Phosphoserine" evidence="2">
    <location>
        <position position="38"/>
    </location>
</feature>
<feature type="modified residue" description="Omega-N-methylarginine" evidence="1">
    <location>
        <position position="321"/>
    </location>
</feature>
<feature type="disulfide bond" evidence="3">
    <location>
        <begin position="282"/>
        <end position="333"/>
    </location>
</feature>
<feature type="splice variant" id="VSP_055601" description="In isoform 2." evidence="10">
    <location>
        <begin position="121"/>
        <end position="143"/>
    </location>
</feature>
<feature type="sequence variant" id="VAR_083211" description="Found in a family with dilated cardiomyopathy and atrial and ventricular arrhythmias; uncertain significance; subject to nonsense-mediated decay; disrupted myosin-binding." evidence="7">
    <location>
        <begin position="255"/>
        <end position="354"/>
    </location>
</feature>
<feature type="sequence variant" id="VAR_042686" description="In dbSNP:rs629001." evidence="6 9">
    <original>D</original>
    <variation>N</variation>
    <location>
        <position position="269"/>
    </location>
</feature>
<dbReference type="EMBL" id="AL390252">
    <property type="status" value="NOT_ANNOTATED_CDS"/>
    <property type="molecule type" value="Genomic_DNA"/>
</dbReference>
<dbReference type="EMBL" id="CH471122">
    <property type="protein sequence ID" value="EAW56379.1"/>
    <property type="molecule type" value="Genomic_DNA"/>
</dbReference>
<dbReference type="EMBL" id="BC132900">
    <property type="protein sequence ID" value="AAI32901.1"/>
    <property type="molecule type" value="mRNA"/>
</dbReference>
<dbReference type="EMBL" id="BC132902">
    <property type="protein sequence ID" value="AAI32903.1"/>
    <property type="molecule type" value="mRNA"/>
</dbReference>
<dbReference type="EMBL" id="BC144471">
    <property type="protein sequence ID" value="AAI44472.1"/>
    <property type="molecule type" value="mRNA"/>
</dbReference>
<dbReference type="CCDS" id="CCDS30793.1">
    <molecule id="A2RUH7-1"/>
</dbReference>
<dbReference type="RefSeq" id="NP_001010985.2">
    <molecule id="A2RUH7-1"/>
    <property type="nucleotide sequence ID" value="NM_001010985.3"/>
</dbReference>
<dbReference type="RefSeq" id="NP_001252542.1">
    <molecule id="A2RUH7-2"/>
    <property type="nucleotide sequence ID" value="NM_001265613.2"/>
</dbReference>
<dbReference type="RefSeq" id="XP_016856662.1">
    <molecule id="A2RUH7-1"/>
    <property type="nucleotide sequence ID" value="XM_017001173.2"/>
</dbReference>
<dbReference type="RefSeq" id="XP_016856663.1">
    <molecule id="A2RUH7-1"/>
    <property type="nucleotide sequence ID" value="XM_017001174.2"/>
</dbReference>
<dbReference type="RefSeq" id="XP_016856664.1">
    <molecule id="A2RUH7-2"/>
    <property type="nucleotide sequence ID" value="XM_017001175.2"/>
</dbReference>
<dbReference type="SMR" id="A2RUH7"/>
<dbReference type="BioGRID" id="131240">
    <property type="interactions" value="13"/>
</dbReference>
<dbReference type="FunCoup" id="A2RUH7">
    <property type="interactions" value="13"/>
</dbReference>
<dbReference type="IntAct" id="A2RUH7">
    <property type="interactions" value="19"/>
</dbReference>
<dbReference type="STRING" id="9606.ENSP00000349678"/>
<dbReference type="GlyGen" id="A2RUH7">
    <property type="glycosylation" value="1 site"/>
</dbReference>
<dbReference type="PhosphoSitePlus" id="A2RUH7"/>
<dbReference type="BioMuta" id="MYBPHL"/>
<dbReference type="MassIVE" id="A2RUH7"/>
<dbReference type="PaxDb" id="9606-ENSP00000349678"/>
<dbReference type="PeptideAtlas" id="A2RUH7"/>
<dbReference type="Antibodypedia" id="33754">
    <property type="antibodies" value="67 antibodies from 18 providers"/>
</dbReference>
<dbReference type="DNASU" id="343263"/>
<dbReference type="Ensembl" id="ENST00000357155.2">
    <molecule id="A2RUH7-1"/>
    <property type="protein sequence ID" value="ENSP00000349678.1"/>
    <property type="gene ID" value="ENSG00000221986.7"/>
</dbReference>
<dbReference type="GeneID" id="343263"/>
<dbReference type="KEGG" id="hsa:343263"/>
<dbReference type="MANE-Select" id="ENST00000357155.2">
    <property type="protein sequence ID" value="ENSP00000349678.1"/>
    <property type="RefSeq nucleotide sequence ID" value="NM_001010985.3"/>
    <property type="RefSeq protein sequence ID" value="NP_001010985.2"/>
</dbReference>
<dbReference type="UCSC" id="uc001dxk.1">
    <molecule id="A2RUH7-1"/>
    <property type="organism name" value="human"/>
</dbReference>
<dbReference type="AGR" id="HGNC:30434"/>
<dbReference type="CTD" id="343263"/>
<dbReference type="DisGeNET" id="343263"/>
<dbReference type="GeneCards" id="MYBPHL"/>
<dbReference type="HGNC" id="HGNC:30434">
    <property type="gene designation" value="MYBPHL"/>
</dbReference>
<dbReference type="HPA" id="ENSG00000221986">
    <property type="expression patterns" value="Tissue enriched (heart)"/>
</dbReference>
<dbReference type="MalaCards" id="MYBPHL"/>
<dbReference type="MIM" id="619807">
    <property type="type" value="gene"/>
</dbReference>
<dbReference type="neXtProt" id="NX_A2RUH7"/>
<dbReference type="OpenTargets" id="ENSG00000221986"/>
<dbReference type="PharmGKB" id="PA147357579"/>
<dbReference type="VEuPathDB" id="HostDB:ENSG00000221986"/>
<dbReference type="eggNOG" id="ENOG502QVIQ">
    <property type="taxonomic scope" value="Eukaryota"/>
</dbReference>
<dbReference type="GeneTree" id="ENSGT00940000162165"/>
<dbReference type="HOGENOM" id="CLU_037185_0_0_1"/>
<dbReference type="InParanoid" id="A2RUH7"/>
<dbReference type="OMA" id="NGCALDT"/>
<dbReference type="OrthoDB" id="6107607at2759"/>
<dbReference type="PAN-GO" id="A2RUH7">
    <property type="GO annotations" value="0 GO annotations based on evolutionary models"/>
</dbReference>
<dbReference type="PhylomeDB" id="A2RUH7"/>
<dbReference type="TreeFam" id="TF334735"/>
<dbReference type="PathwayCommons" id="A2RUH7"/>
<dbReference type="SignaLink" id="A2RUH7"/>
<dbReference type="BioGRID-ORCS" id="343263">
    <property type="hits" value="21 hits in 1145 CRISPR screens"/>
</dbReference>
<dbReference type="ChiTaRS" id="MYBPHL">
    <property type="organism name" value="human"/>
</dbReference>
<dbReference type="GenomeRNAi" id="343263"/>
<dbReference type="Pharos" id="A2RUH7">
    <property type="development level" value="Tbio"/>
</dbReference>
<dbReference type="PRO" id="PR:A2RUH7"/>
<dbReference type="Proteomes" id="UP000005640">
    <property type="component" value="Chromosome 1"/>
</dbReference>
<dbReference type="RNAct" id="A2RUH7">
    <property type="molecule type" value="protein"/>
</dbReference>
<dbReference type="Bgee" id="ENSG00000221986">
    <property type="expression patterns" value="Expressed in right atrium auricular region and 88 other cell types or tissues"/>
</dbReference>
<dbReference type="GO" id="GO:0036379">
    <property type="term" value="C:myofilament"/>
    <property type="evidence" value="ECO:0000314"/>
    <property type="project" value="UniProtKB"/>
</dbReference>
<dbReference type="GO" id="GO:0030017">
    <property type="term" value="C:sarcomere"/>
    <property type="evidence" value="ECO:0007669"/>
    <property type="project" value="UniProtKB-SubCell"/>
</dbReference>
<dbReference type="GO" id="GO:0001701">
    <property type="term" value="P:in utero embryonic development"/>
    <property type="evidence" value="ECO:0007669"/>
    <property type="project" value="Ensembl"/>
</dbReference>
<dbReference type="CDD" id="cd00063">
    <property type="entry name" value="FN3"/>
    <property type="match status" value="1"/>
</dbReference>
<dbReference type="FunFam" id="2.60.40.10:FF:000977">
    <property type="entry name" value="Myosin binding protein H like"/>
    <property type="match status" value="1"/>
</dbReference>
<dbReference type="FunFam" id="2.60.40.10:FF:000031">
    <property type="entry name" value="Myosin-binding protein C, slow type"/>
    <property type="match status" value="1"/>
</dbReference>
<dbReference type="FunFam" id="2.60.40.10:FF:000062">
    <property type="entry name" value="Myosin-binding protein C, slow type"/>
    <property type="match status" value="1"/>
</dbReference>
<dbReference type="Gene3D" id="2.60.40.10">
    <property type="entry name" value="Immunoglobulins"/>
    <property type="match status" value="3"/>
</dbReference>
<dbReference type="InterPro" id="IPR003961">
    <property type="entry name" value="FN3_dom"/>
</dbReference>
<dbReference type="InterPro" id="IPR036116">
    <property type="entry name" value="FN3_sf"/>
</dbReference>
<dbReference type="InterPro" id="IPR007110">
    <property type="entry name" value="Ig-like_dom"/>
</dbReference>
<dbReference type="InterPro" id="IPR036179">
    <property type="entry name" value="Ig-like_dom_sf"/>
</dbReference>
<dbReference type="InterPro" id="IPR013783">
    <property type="entry name" value="Ig-like_fold"/>
</dbReference>
<dbReference type="InterPro" id="IPR013098">
    <property type="entry name" value="Ig_I-set"/>
</dbReference>
<dbReference type="InterPro" id="IPR003599">
    <property type="entry name" value="Ig_sub"/>
</dbReference>
<dbReference type="InterPro" id="IPR003598">
    <property type="entry name" value="Ig_sub2"/>
</dbReference>
<dbReference type="InterPro" id="IPR050964">
    <property type="entry name" value="Striated_Muscle_Regulatory"/>
</dbReference>
<dbReference type="PANTHER" id="PTHR13817:SF171">
    <property type="entry name" value="STRETCHIN-MLCK, ISOFORM U"/>
    <property type="match status" value="1"/>
</dbReference>
<dbReference type="PANTHER" id="PTHR13817">
    <property type="entry name" value="TITIN"/>
    <property type="match status" value="1"/>
</dbReference>
<dbReference type="Pfam" id="PF00041">
    <property type="entry name" value="fn3"/>
    <property type="match status" value="1"/>
</dbReference>
<dbReference type="Pfam" id="PF07679">
    <property type="entry name" value="I-set"/>
    <property type="match status" value="2"/>
</dbReference>
<dbReference type="PRINTS" id="PR00014">
    <property type="entry name" value="FNTYPEIII"/>
</dbReference>
<dbReference type="SMART" id="SM00060">
    <property type="entry name" value="FN3"/>
    <property type="match status" value="1"/>
</dbReference>
<dbReference type="SMART" id="SM00409">
    <property type="entry name" value="IG"/>
    <property type="match status" value="2"/>
</dbReference>
<dbReference type="SMART" id="SM00408">
    <property type="entry name" value="IGc2"/>
    <property type="match status" value="2"/>
</dbReference>
<dbReference type="SUPFAM" id="SSF49265">
    <property type="entry name" value="Fibronectin type III"/>
    <property type="match status" value="1"/>
</dbReference>
<dbReference type="SUPFAM" id="SSF48726">
    <property type="entry name" value="Immunoglobulin"/>
    <property type="match status" value="2"/>
</dbReference>
<dbReference type="PROSITE" id="PS50853">
    <property type="entry name" value="FN3"/>
    <property type="match status" value="1"/>
</dbReference>
<dbReference type="PROSITE" id="PS50835">
    <property type="entry name" value="IG_LIKE"/>
    <property type="match status" value="1"/>
</dbReference>
<keyword id="KW-0025">Alternative splicing</keyword>
<keyword id="KW-0963">Cytoplasm</keyword>
<keyword id="KW-1015">Disulfide bond</keyword>
<keyword id="KW-0393">Immunoglobulin domain</keyword>
<keyword id="KW-0488">Methylation</keyword>
<keyword id="KW-0597">Phosphoprotein</keyword>
<keyword id="KW-1267">Proteomics identification</keyword>
<keyword id="KW-1185">Reference proteome</keyword>
<keyword id="KW-0677">Repeat</keyword>
<accession>A2RUH7</accession>
<accession>B7ZME5</accession>
<accession>Q5T2Z7</accession>
<organism>
    <name type="scientific">Homo sapiens</name>
    <name type="common">Human</name>
    <dbReference type="NCBI Taxonomy" id="9606"/>
    <lineage>
        <taxon>Eukaryota</taxon>
        <taxon>Metazoa</taxon>
        <taxon>Chordata</taxon>
        <taxon>Craniata</taxon>
        <taxon>Vertebrata</taxon>
        <taxon>Euteleostomi</taxon>
        <taxon>Mammalia</taxon>
        <taxon>Eutheria</taxon>
        <taxon>Euarchontoglires</taxon>
        <taxon>Primates</taxon>
        <taxon>Haplorrhini</taxon>
        <taxon>Catarrhini</taxon>
        <taxon>Hominidae</taxon>
        <taxon>Homo</taxon>
    </lineage>
</organism>
<evidence type="ECO:0000250" key="1">
    <source>
        <dbReference type="UniProtKB" id="Q5FW53"/>
    </source>
</evidence>
<evidence type="ECO:0000250" key="2">
    <source>
        <dbReference type="UniProtKB" id="Q5PQM4"/>
    </source>
</evidence>
<evidence type="ECO:0000255" key="3">
    <source>
        <dbReference type="PROSITE-ProRule" id="PRU00114"/>
    </source>
</evidence>
<evidence type="ECO:0000255" key="4">
    <source>
        <dbReference type="PROSITE-ProRule" id="PRU00316"/>
    </source>
</evidence>
<evidence type="ECO:0000256" key="5">
    <source>
        <dbReference type="SAM" id="MobiDB-lite"/>
    </source>
</evidence>
<evidence type="ECO:0000269" key="6">
    <source>
    </source>
</evidence>
<evidence type="ECO:0000269" key="7">
    <source>
    </source>
</evidence>
<evidence type="ECO:0000269" key="8">
    <source>
    </source>
</evidence>
<evidence type="ECO:0000269" key="9">
    <source ref="2"/>
</evidence>
<evidence type="ECO:0000303" key="10">
    <source>
    </source>
</evidence>
<evidence type="ECO:0000305" key="11"/>
<evidence type="ECO:0000305" key="12">
    <source>
    </source>
</evidence>
<evidence type="ECO:0000312" key="13">
    <source>
        <dbReference type="HGNC" id="HGNC:30434"/>
    </source>
</evidence>
<reference key="1">
    <citation type="journal article" date="2006" name="Nature">
        <title>The DNA sequence and biological annotation of human chromosome 1.</title>
        <authorList>
            <person name="Gregory S.G."/>
            <person name="Barlow K.F."/>
            <person name="McLay K.E."/>
            <person name="Kaul R."/>
            <person name="Swarbreck D."/>
            <person name="Dunham A."/>
            <person name="Scott C.E."/>
            <person name="Howe K.L."/>
            <person name="Woodfine K."/>
            <person name="Spencer C.C.A."/>
            <person name="Jones M.C."/>
            <person name="Gillson C."/>
            <person name="Searle S."/>
            <person name="Zhou Y."/>
            <person name="Kokocinski F."/>
            <person name="McDonald L."/>
            <person name="Evans R."/>
            <person name="Phillips K."/>
            <person name="Atkinson A."/>
            <person name="Cooper R."/>
            <person name="Jones C."/>
            <person name="Hall R.E."/>
            <person name="Andrews T.D."/>
            <person name="Lloyd C."/>
            <person name="Ainscough R."/>
            <person name="Almeida J.P."/>
            <person name="Ambrose K.D."/>
            <person name="Anderson F."/>
            <person name="Andrew R.W."/>
            <person name="Ashwell R.I.S."/>
            <person name="Aubin K."/>
            <person name="Babbage A.K."/>
            <person name="Bagguley C.L."/>
            <person name="Bailey J."/>
            <person name="Beasley H."/>
            <person name="Bethel G."/>
            <person name="Bird C.P."/>
            <person name="Bray-Allen S."/>
            <person name="Brown J.Y."/>
            <person name="Brown A.J."/>
            <person name="Buckley D."/>
            <person name="Burton J."/>
            <person name="Bye J."/>
            <person name="Carder C."/>
            <person name="Chapman J.C."/>
            <person name="Clark S.Y."/>
            <person name="Clarke G."/>
            <person name="Clee C."/>
            <person name="Cobley V."/>
            <person name="Collier R.E."/>
            <person name="Corby N."/>
            <person name="Coville G.J."/>
            <person name="Davies J."/>
            <person name="Deadman R."/>
            <person name="Dunn M."/>
            <person name="Earthrowl M."/>
            <person name="Ellington A.G."/>
            <person name="Errington H."/>
            <person name="Frankish A."/>
            <person name="Frankland J."/>
            <person name="French L."/>
            <person name="Garner P."/>
            <person name="Garnett J."/>
            <person name="Gay L."/>
            <person name="Ghori M.R.J."/>
            <person name="Gibson R."/>
            <person name="Gilby L.M."/>
            <person name="Gillett W."/>
            <person name="Glithero R.J."/>
            <person name="Grafham D.V."/>
            <person name="Griffiths C."/>
            <person name="Griffiths-Jones S."/>
            <person name="Grocock R."/>
            <person name="Hammond S."/>
            <person name="Harrison E.S.I."/>
            <person name="Hart E."/>
            <person name="Haugen E."/>
            <person name="Heath P.D."/>
            <person name="Holmes S."/>
            <person name="Holt K."/>
            <person name="Howden P.J."/>
            <person name="Hunt A.R."/>
            <person name="Hunt S.E."/>
            <person name="Hunter G."/>
            <person name="Isherwood J."/>
            <person name="James R."/>
            <person name="Johnson C."/>
            <person name="Johnson D."/>
            <person name="Joy A."/>
            <person name="Kay M."/>
            <person name="Kershaw J.K."/>
            <person name="Kibukawa M."/>
            <person name="Kimberley A.M."/>
            <person name="King A."/>
            <person name="Knights A.J."/>
            <person name="Lad H."/>
            <person name="Laird G."/>
            <person name="Lawlor S."/>
            <person name="Leongamornlert D.A."/>
            <person name="Lloyd D.M."/>
            <person name="Loveland J."/>
            <person name="Lovell J."/>
            <person name="Lush M.J."/>
            <person name="Lyne R."/>
            <person name="Martin S."/>
            <person name="Mashreghi-Mohammadi M."/>
            <person name="Matthews L."/>
            <person name="Matthews N.S.W."/>
            <person name="McLaren S."/>
            <person name="Milne S."/>
            <person name="Mistry S."/>
            <person name="Moore M.J.F."/>
            <person name="Nickerson T."/>
            <person name="O'Dell C.N."/>
            <person name="Oliver K."/>
            <person name="Palmeiri A."/>
            <person name="Palmer S.A."/>
            <person name="Parker A."/>
            <person name="Patel D."/>
            <person name="Pearce A.V."/>
            <person name="Peck A.I."/>
            <person name="Pelan S."/>
            <person name="Phelps K."/>
            <person name="Phillimore B.J."/>
            <person name="Plumb R."/>
            <person name="Rajan J."/>
            <person name="Raymond C."/>
            <person name="Rouse G."/>
            <person name="Saenphimmachak C."/>
            <person name="Sehra H.K."/>
            <person name="Sheridan E."/>
            <person name="Shownkeen R."/>
            <person name="Sims S."/>
            <person name="Skuce C.D."/>
            <person name="Smith M."/>
            <person name="Steward C."/>
            <person name="Subramanian S."/>
            <person name="Sycamore N."/>
            <person name="Tracey A."/>
            <person name="Tromans A."/>
            <person name="Van Helmond Z."/>
            <person name="Wall M."/>
            <person name="Wallis J.M."/>
            <person name="White S."/>
            <person name="Whitehead S.L."/>
            <person name="Wilkinson J.E."/>
            <person name="Willey D.L."/>
            <person name="Williams H."/>
            <person name="Wilming L."/>
            <person name="Wray P.W."/>
            <person name="Wu Z."/>
            <person name="Coulson A."/>
            <person name="Vaudin M."/>
            <person name="Sulston J.E."/>
            <person name="Durbin R.M."/>
            <person name="Hubbard T."/>
            <person name="Wooster R."/>
            <person name="Dunham I."/>
            <person name="Carter N.P."/>
            <person name="McVean G."/>
            <person name="Ross M.T."/>
            <person name="Harrow J."/>
            <person name="Olson M.V."/>
            <person name="Beck S."/>
            <person name="Rogers J."/>
            <person name="Bentley D.R."/>
        </authorList>
    </citation>
    <scope>NUCLEOTIDE SEQUENCE [LARGE SCALE GENOMIC DNA]</scope>
</reference>
<reference key="2">
    <citation type="submission" date="2005-07" db="EMBL/GenBank/DDBJ databases">
        <authorList>
            <person name="Mural R.J."/>
            <person name="Istrail S."/>
            <person name="Sutton G.G."/>
            <person name="Florea L."/>
            <person name="Halpern A.L."/>
            <person name="Mobarry C.M."/>
            <person name="Lippert R."/>
            <person name="Walenz B."/>
            <person name="Shatkay H."/>
            <person name="Dew I."/>
            <person name="Miller J.R."/>
            <person name="Flanigan M.J."/>
            <person name="Edwards N.J."/>
            <person name="Bolanos R."/>
            <person name="Fasulo D."/>
            <person name="Halldorsson B.V."/>
            <person name="Hannenhalli S."/>
            <person name="Turner R."/>
            <person name="Yooseph S."/>
            <person name="Lu F."/>
            <person name="Nusskern D.R."/>
            <person name="Shue B.C."/>
            <person name="Zheng X.H."/>
            <person name="Zhong F."/>
            <person name="Delcher A.L."/>
            <person name="Huson D.H."/>
            <person name="Kravitz S.A."/>
            <person name="Mouchard L."/>
            <person name="Reinert K."/>
            <person name="Remington K.A."/>
            <person name="Clark A.G."/>
            <person name="Waterman M.S."/>
            <person name="Eichler E.E."/>
            <person name="Adams M.D."/>
            <person name="Hunkapiller M.W."/>
            <person name="Myers E.W."/>
            <person name="Venter J.C."/>
        </authorList>
    </citation>
    <scope>NUCLEOTIDE SEQUENCE [LARGE SCALE GENOMIC DNA]</scope>
    <scope>VARIANT ASN-269</scope>
</reference>
<reference key="3">
    <citation type="journal article" date="2004" name="Genome Res.">
        <title>The status, quality, and expansion of the NIH full-length cDNA project: the Mammalian Gene Collection (MGC).</title>
        <authorList>
            <consortium name="The MGC Project Team"/>
        </authorList>
    </citation>
    <scope>NUCLEOTIDE SEQUENCE [LARGE SCALE MRNA] (ISOFORMS 1 AND 2)</scope>
    <scope>VARIANT ASN-269</scope>
    <source>
        <tissue>Lung</tissue>
    </source>
</reference>
<reference key="4">
    <citation type="journal article" date="2017" name="Circulation">
        <title>Experimental Modeling Supports a Role for MyBP-HL as a Novel Myofilament Component in Arrhythmia and Dilated Cardiomyopathy.</title>
        <authorList>
            <person name="Barefield D.Y."/>
            <person name="Puckelwartz M.J."/>
            <person name="Kim E.Y."/>
            <person name="Wilsbacher L.D."/>
            <person name="Vo A.H."/>
            <person name="Waters E.A."/>
            <person name="Earley J.U."/>
            <person name="Hadhazy M."/>
            <person name="Dellefave-Castillo L."/>
            <person name="Pesce L.L."/>
            <person name="McNally E.M."/>
        </authorList>
    </citation>
    <scope>VARIANT 255-ARG--ASN-355 DEL</scope>
    <scope>CHARACTERIZATION OF VARIANT 255-ARG--ASN-355 DEL</scope>
    <scope>TISSUE SPECIFICITY</scope>
    <scope>SUBCELLULAR LOCATION</scope>
    <scope>FUNCTION</scope>
</reference>
<reference key="5">
    <citation type="journal article" date="2019" name="Sci. Rep.">
        <title>Myosin binding protein H-like (MYBPHL): a promising biomarker to predict atrial damage.</title>
        <authorList>
            <person name="Lahm H."/>
            <person name="Dressen M."/>
            <person name="Beck N."/>
            <person name="Doppler S."/>
            <person name="Deutsch M.A."/>
            <person name="Matsushima S."/>
            <person name="Neb I."/>
            <person name="Koenig K.C."/>
            <person name="Sideris K."/>
            <person name="Voss S."/>
            <person name="Eschenbach L."/>
            <person name="Puluca N."/>
            <person name="Deisenhofer I."/>
            <person name="Doll S."/>
            <person name="Holdenrieder S."/>
            <person name="Mann M."/>
            <person name="Lange R."/>
            <person name="Krane M."/>
        </authorList>
    </citation>
    <scope>TISSUE SPECIFICITY</scope>
</reference>
<proteinExistence type="evidence at protein level"/>
<comment type="function">
    <text evidence="7">Myosin-binding protein which plays a role in cardiac function (PubMed:28778945). Seems to regulate conduction in the atria and ventricular conduction systems (PubMed:28778945).</text>
</comment>
<comment type="interaction">
    <interactant intactId="EBI-9088235">
        <id>A2RUH7</id>
    </interactant>
    <interactant intactId="EBI-1049597">
        <id>P27797</id>
        <label>CALR</label>
    </interactant>
    <organismsDiffer>false</organismsDiffer>
    <experiments>3</experiments>
</comment>
<comment type="interaction">
    <interactant intactId="EBI-9088235">
        <id>A2RUH7</id>
    </interactant>
    <interactant intactId="EBI-718729">
        <id>P55212</id>
        <label>CASP6</label>
    </interactant>
    <organismsDiffer>false</organismsDiffer>
    <experiments>3</experiments>
</comment>
<comment type="interaction">
    <interactant intactId="EBI-9088235">
        <id>A2RUH7</id>
    </interactant>
    <interactant intactId="EBI-746189">
        <id>Q15078</id>
        <label>CDK5R1</label>
    </interactant>
    <organismsDiffer>false</organismsDiffer>
    <experiments>3</experiments>
</comment>
<comment type="interaction">
    <interactant intactId="EBI-9088235">
        <id>A2RUH7</id>
    </interactant>
    <interactant intactId="EBI-351007">
        <id>P36957</id>
        <label>DLST</label>
    </interactant>
    <organismsDiffer>false</organismsDiffer>
    <experiments>3</experiments>
</comment>
<comment type="interaction">
    <interactant intactId="EBI-9088235">
        <id>A2RUH7</id>
    </interactant>
    <interactant intactId="EBI-741101">
        <id>Q13643</id>
        <label>FHL3</label>
    </interactant>
    <organismsDiffer>false</organismsDiffer>
    <experiments>3</experiments>
</comment>
<comment type="interaction">
    <interactant intactId="EBI-9088235">
        <id>A2RUH7</id>
    </interactant>
    <interactant intactId="EBI-744302">
        <id>P14136</id>
        <label>GFAP</label>
    </interactant>
    <organismsDiffer>false</organismsDiffer>
    <experiments>6</experiments>
</comment>
<comment type="interaction">
    <interactant intactId="EBI-9088235">
        <id>A2RUH7</id>
    </interactant>
    <interactant intactId="EBI-1055254">
        <id>Q8WXH2</id>
        <label>JPH3</label>
    </interactant>
    <organismsDiffer>false</organismsDiffer>
    <experiments>3</experiments>
</comment>
<comment type="interaction">
    <interactant intactId="EBI-9088235">
        <id>A2RUH7</id>
    </interactant>
    <interactant intactId="EBI-21591415">
        <id>P13473-2</id>
        <label>LAMP2</label>
    </interactant>
    <organismsDiffer>false</organismsDiffer>
    <experiments>3</experiments>
</comment>
<comment type="interaction">
    <interactant intactId="EBI-9088235">
        <id>A2RUH7</id>
    </interactant>
    <interactant intactId="EBI-2339737">
        <id>Q96EH3</id>
        <label>MALSU1</label>
    </interactant>
    <organismsDiffer>false</organismsDiffer>
    <experiments>3</experiments>
</comment>
<comment type="interaction">
    <interactant intactId="EBI-9088235">
        <id>A2RUH7</id>
    </interactant>
    <interactant intactId="EBI-1055945">
        <id>Q8TDX7</id>
        <label>NEK7</label>
    </interactant>
    <organismsDiffer>false</organismsDiffer>
    <experiments>3</experiments>
</comment>
<comment type="interaction">
    <interactant intactId="EBI-9088235">
        <id>A2RUH7</id>
    </interactant>
    <interactant intactId="EBI-286642">
        <id>P62826</id>
        <label>RAN</label>
    </interactant>
    <organismsDiffer>false</organismsDiffer>
    <experiments>3</experiments>
</comment>
<comment type="interaction">
    <interactant intactId="EBI-9088235">
        <id>A2RUH7</id>
    </interactant>
    <interactant intactId="EBI-11952721">
        <id>Q05BL1</id>
        <label>TP53BP2</label>
    </interactant>
    <organismsDiffer>false</organismsDiffer>
    <experiments>3</experiments>
</comment>
<comment type="subcellular location">
    <subcellularLocation>
        <location evidence="12">Cytoplasm</location>
        <location evidence="12">Myofibril</location>
        <location evidence="12">Sarcomere</location>
    </subcellularLocation>
</comment>
<comment type="alternative products">
    <event type="alternative splicing"/>
    <isoform>
        <id>A2RUH7-1</id>
        <name>1</name>
        <sequence type="displayed"/>
    </isoform>
    <isoform>
        <id>A2RUH7-2</id>
        <name>2</name>
        <sequence type="described" ref="VSP_055601"/>
    </isoform>
</comment>
<comment type="tissue specificity">
    <text evidence="7 8">Expressed in heart, with higher expression in the atria.</text>
</comment>
<comment type="tissue specificity">
    <molecule>Isoform 1</molecule>
    <text evidence="8">Expressed in left atrium and ventricle, arteria mammaria interna and skeletal muscle.</text>
</comment>
<comment type="tissue specificity">
    <molecule>Isoform 2</molecule>
    <text evidence="8">Expressed specifically en the left atrium.</text>
</comment>
<comment type="similarity">
    <text evidence="11">Belongs to the immunoglobulin superfamily. MyBP family.</text>
</comment>
<protein>
    <recommendedName>
        <fullName evidence="11">Myosin-binding protein H-like</fullName>
    </recommendedName>
</protein>
<gene>
    <name evidence="13" type="primary">MYBPHL</name>
</gene>